<feature type="chain" id="PRO_0000136967" description="Nucleoside diphosphate kinase">
    <location>
        <begin position="1"/>
        <end position="140"/>
    </location>
</feature>
<feature type="active site" description="Pros-phosphohistidine intermediate" evidence="1">
    <location>
        <position position="115"/>
    </location>
</feature>
<feature type="binding site" evidence="1">
    <location>
        <position position="9"/>
    </location>
    <ligand>
        <name>ATP</name>
        <dbReference type="ChEBI" id="CHEBI:30616"/>
    </ligand>
</feature>
<feature type="binding site" evidence="1">
    <location>
        <position position="57"/>
    </location>
    <ligand>
        <name>ATP</name>
        <dbReference type="ChEBI" id="CHEBI:30616"/>
    </ligand>
</feature>
<feature type="binding site" evidence="1">
    <location>
        <position position="85"/>
    </location>
    <ligand>
        <name>ATP</name>
        <dbReference type="ChEBI" id="CHEBI:30616"/>
    </ligand>
</feature>
<feature type="binding site" evidence="1">
    <location>
        <position position="91"/>
    </location>
    <ligand>
        <name>ATP</name>
        <dbReference type="ChEBI" id="CHEBI:30616"/>
    </ligand>
</feature>
<feature type="binding site" evidence="1">
    <location>
        <position position="102"/>
    </location>
    <ligand>
        <name>ATP</name>
        <dbReference type="ChEBI" id="CHEBI:30616"/>
    </ligand>
</feature>
<feature type="binding site" evidence="1">
    <location>
        <position position="112"/>
    </location>
    <ligand>
        <name>ATP</name>
        <dbReference type="ChEBI" id="CHEBI:30616"/>
    </ligand>
</feature>
<gene>
    <name evidence="1" type="primary">ndk</name>
    <name type="ordered locus">CT2002</name>
</gene>
<evidence type="ECO:0000255" key="1">
    <source>
        <dbReference type="HAMAP-Rule" id="MF_00451"/>
    </source>
</evidence>
<comment type="function">
    <text evidence="1">Major role in the synthesis of nucleoside triphosphates other than ATP. The ATP gamma phosphate is transferred to the NDP beta phosphate via a ping-pong mechanism, using a phosphorylated active-site intermediate.</text>
</comment>
<comment type="catalytic activity">
    <reaction evidence="1">
        <text>a 2'-deoxyribonucleoside 5'-diphosphate + ATP = a 2'-deoxyribonucleoside 5'-triphosphate + ADP</text>
        <dbReference type="Rhea" id="RHEA:44640"/>
        <dbReference type="ChEBI" id="CHEBI:30616"/>
        <dbReference type="ChEBI" id="CHEBI:61560"/>
        <dbReference type="ChEBI" id="CHEBI:73316"/>
        <dbReference type="ChEBI" id="CHEBI:456216"/>
        <dbReference type="EC" id="2.7.4.6"/>
    </reaction>
</comment>
<comment type="catalytic activity">
    <reaction evidence="1">
        <text>a ribonucleoside 5'-diphosphate + ATP = a ribonucleoside 5'-triphosphate + ADP</text>
        <dbReference type="Rhea" id="RHEA:18113"/>
        <dbReference type="ChEBI" id="CHEBI:30616"/>
        <dbReference type="ChEBI" id="CHEBI:57930"/>
        <dbReference type="ChEBI" id="CHEBI:61557"/>
        <dbReference type="ChEBI" id="CHEBI:456216"/>
        <dbReference type="EC" id="2.7.4.6"/>
    </reaction>
</comment>
<comment type="cofactor">
    <cofactor evidence="1">
        <name>Mg(2+)</name>
        <dbReference type="ChEBI" id="CHEBI:18420"/>
    </cofactor>
</comment>
<comment type="subunit">
    <text evidence="1">Homotetramer.</text>
</comment>
<comment type="subcellular location">
    <subcellularLocation>
        <location evidence="1">Cytoplasm</location>
    </subcellularLocation>
</comment>
<comment type="similarity">
    <text evidence="1">Belongs to the NDK family.</text>
</comment>
<protein>
    <recommendedName>
        <fullName evidence="1">Nucleoside diphosphate kinase</fullName>
        <shortName evidence="1">NDK</shortName>
        <shortName evidence="1">NDP kinase</shortName>
        <ecNumber evidence="1">2.7.4.6</ecNumber>
    </recommendedName>
    <alternativeName>
        <fullName evidence="1">Nucleoside-2-P kinase</fullName>
    </alternativeName>
</protein>
<name>NDK_CHLTE</name>
<accession>Q8KAZ6</accession>
<dbReference type="EC" id="2.7.4.6" evidence="1"/>
<dbReference type="EMBL" id="AE006470">
    <property type="protein sequence ID" value="AAM73220.1"/>
    <property type="molecule type" value="Genomic_DNA"/>
</dbReference>
<dbReference type="RefSeq" id="NP_662878.1">
    <property type="nucleotide sequence ID" value="NC_002932.3"/>
</dbReference>
<dbReference type="RefSeq" id="WP_010933658.1">
    <property type="nucleotide sequence ID" value="NC_002932.3"/>
</dbReference>
<dbReference type="SMR" id="Q8KAZ6"/>
<dbReference type="STRING" id="194439.CT2002"/>
<dbReference type="EnsemblBacteria" id="AAM73220">
    <property type="protein sequence ID" value="AAM73220"/>
    <property type="gene ID" value="CT2002"/>
</dbReference>
<dbReference type="KEGG" id="cte:CT2002"/>
<dbReference type="PATRIC" id="fig|194439.7.peg.1813"/>
<dbReference type="eggNOG" id="COG0105">
    <property type="taxonomic scope" value="Bacteria"/>
</dbReference>
<dbReference type="HOGENOM" id="CLU_060216_8_1_10"/>
<dbReference type="OrthoDB" id="9801161at2"/>
<dbReference type="Proteomes" id="UP000001007">
    <property type="component" value="Chromosome"/>
</dbReference>
<dbReference type="GO" id="GO:0005737">
    <property type="term" value="C:cytoplasm"/>
    <property type="evidence" value="ECO:0007669"/>
    <property type="project" value="UniProtKB-SubCell"/>
</dbReference>
<dbReference type="GO" id="GO:0005524">
    <property type="term" value="F:ATP binding"/>
    <property type="evidence" value="ECO:0007669"/>
    <property type="project" value="UniProtKB-UniRule"/>
</dbReference>
<dbReference type="GO" id="GO:0046872">
    <property type="term" value="F:metal ion binding"/>
    <property type="evidence" value="ECO:0007669"/>
    <property type="project" value="UniProtKB-KW"/>
</dbReference>
<dbReference type="GO" id="GO:0004550">
    <property type="term" value="F:nucleoside diphosphate kinase activity"/>
    <property type="evidence" value="ECO:0007669"/>
    <property type="project" value="UniProtKB-UniRule"/>
</dbReference>
<dbReference type="GO" id="GO:0006241">
    <property type="term" value="P:CTP biosynthetic process"/>
    <property type="evidence" value="ECO:0007669"/>
    <property type="project" value="UniProtKB-UniRule"/>
</dbReference>
<dbReference type="GO" id="GO:0006183">
    <property type="term" value="P:GTP biosynthetic process"/>
    <property type="evidence" value="ECO:0007669"/>
    <property type="project" value="UniProtKB-UniRule"/>
</dbReference>
<dbReference type="GO" id="GO:0006228">
    <property type="term" value="P:UTP biosynthetic process"/>
    <property type="evidence" value="ECO:0007669"/>
    <property type="project" value="UniProtKB-UniRule"/>
</dbReference>
<dbReference type="CDD" id="cd04413">
    <property type="entry name" value="NDPk_I"/>
    <property type="match status" value="1"/>
</dbReference>
<dbReference type="FunFam" id="3.30.70.141:FF:000003">
    <property type="entry name" value="Nucleoside diphosphate kinase"/>
    <property type="match status" value="1"/>
</dbReference>
<dbReference type="Gene3D" id="3.30.70.141">
    <property type="entry name" value="Nucleoside diphosphate kinase-like domain"/>
    <property type="match status" value="1"/>
</dbReference>
<dbReference type="HAMAP" id="MF_00451">
    <property type="entry name" value="NDP_kinase"/>
    <property type="match status" value="1"/>
</dbReference>
<dbReference type="InterPro" id="IPR034907">
    <property type="entry name" value="NDK-like_dom"/>
</dbReference>
<dbReference type="InterPro" id="IPR036850">
    <property type="entry name" value="NDK-like_dom_sf"/>
</dbReference>
<dbReference type="InterPro" id="IPR001564">
    <property type="entry name" value="Nucleoside_diP_kinase"/>
</dbReference>
<dbReference type="NCBIfam" id="NF001908">
    <property type="entry name" value="PRK00668.1"/>
    <property type="match status" value="1"/>
</dbReference>
<dbReference type="NCBIfam" id="NF011113">
    <property type="entry name" value="PRK14541.1"/>
    <property type="match status" value="1"/>
</dbReference>
<dbReference type="PANTHER" id="PTHR46161">
    <property type="entry name" value="NUCLEOSIDE DIPHOSPHATE KINASE"/>
    <property type="match status" value="1"/>
</dbReference>
<dbReference type="PANTHER" id="PTHR46161:SF3">
    <property type="entry name" value="NUCLEOSIDE DIPHOSPHATE KINASE DDB_G0292928-RELATED"/>
    <property type="match status" value="1"/>
</dbReference>
<dbReference type="Pfam" id="PF00334">
    <property type="entry name" value="NDK"/>
    <property type="match status" value="1"/>
</dbReference>
<dbReference type="PRINTS" id="PR01243">
    <property type="entry name" value="NUCDPKINASE"/>
</dbReference>
<dbReference type="SMART" id="SM00562">
    <property type="entry name" value="NDK"/>
    <property type="match status" value="1"/>
</dbReference>
<dbReference type="SUPFAM" id="SSF54919">
    <property type="entry name" value="Nucleoside diphosphate kinase, NDK"/>
    <property type="match status" value="1"/>
</dbReference>
<dbReference type="PROSITE" id="PS51374">
    <property type="entry name" value="NDPK_LIKE"/>
    <property type="match status" value="1"/>
</dbReference>
<proteinExistence type="inferred from homology"/>
<reference key="1">
    <citation type="journal article" date="2002" name="Proc. Natl. Acad. Sci. U.S.A.">
        <title>The complete genome sequence of Chlorobium tepidum TLS, a photosynthetic, anaerobic, green-sulfur bacterium.</title>
        <authorList>
            <person name="Eisen J.A."/>
            <person name="Nelson K.E."/>
            <person name="Paulsen I.T."/>
            <person name="Heidelberg J.F."/>
            <person name="Wu M."/>
            <person name="Dodson R.J."/>
            <person name="DeBoy R.T."/>
            <person name="Gwinn M.L."/>
            <person name="Nelson W.C."/>
            <person name="Haft D.H."/>
            <person name="Hickey E.K."/>
            <person name="Peterson J.D."/>
            <person name="Durkin A.S."/>
            <person name="Kolonay J.F."/>
            <person name="Yang F."/>
            <person name="Holt I.E."/>
            <person name="Umayam L.A."/>
            <person name="Mason T.M."/>
            <person name="Brenner M."/>
            <person name="Shea T.P."/>
            <person name="Parksey D.S."/>
            <person name="Nierman W.C."/>
            <person name="Feldblyum T.V."/>
            <person name="Hansen C.L."/>
            <person name="Craven M.B."/>
            <person name="Radune D."/>
            <person name="Vamathevan J.J."/>
            <person name="Khouri H.M."/>
            <person name="White O."/>
            <person name="Gruber T.M."/>
            <person name="Ketchum K.A."/>
            <person name="Venter J.C."/>
            <person name="Tettelin H."/>
            <person name="Bryant D.A."/>
            <person name="Fraser C.M."/>
        </authorList>
    </citation>
    <scope>NUCLEOTIDE SEQUENCE [LARGE SCALE GENOMIC DNA]</scope>
    <source>
        <strain>ATCC 49652 / DSM 12025 / NBRC 103806 / TLS</strain>
    </source>
</reference>
<sequence length="140" mass="15446">MERTLTILKPDCVRKQLIGAVTNMIERAGFRIVAMKKTRLTKETAGAFYAVHKERPFYGELVEFMSSGPCVPMILEKENAVADFRTLIGATDPAQADEGTIRKLYADSKGENIIHGSDSAENAAIESAFFFAAEEVVRVD</sequence>
<keyword id="KW-0067">ATP-binding</keyword>
<keyword id="KW-0963">Cytoplasm</keyword>
<keyword id="KW-0418">Kinase</keyword>
<keyword id="KW-0460">Magnesium</keyword>
<keyword id="KW-0479">Metal-binding</keyword>
<keyword id="KW-0546">Nucleotide metabolism</keyword>
<keyword id="KW-0547">Nucleotide-binding</keyword>
<keyword id="KW-0597">Phosphoprotein</keyword>
<keyword id="KW-1185">Reference proteome</keyword>
<keyword id="KW-0808">Transferase</keyword>
<organism>
    <name type="scientific">Chlorobaculum tepidum (strain ATCC 49652 / DSM 12025 / NBRC 103806 / TLS)</name>
    <name type="common">Chlorobium tepidum</name>
    <dbReference type="NCBI Taxonomy" id="194439"/>
    <lineage>
        <taxon>Bacteria</taxon>
        <taxon>Pseudomonadati</taxon>
        <taxon>Chlorobiota</taxon>
        <taxon>Chlorobiia</taxon>
        <taxon>Chlorobiales</taxon>
        <taxon>Chlorobiaceae</taxon>
        <taxon>Chlorobaculum</taxon>
    </lineage>
</organism>